<dbReference type="EMBL" id="X78119">
    <property type="protein sequence ID" value="CAA55009.1"/>
    <property type="molecule type" value="mRNA"/>
</dbReference>
<dbReference type="PIR" id="S51941">
    <property type="entry name" value="S51941"/>
</dbReference>
<dbReference type="PDB" id="3EHK">
    <property type="method" value="X-ray"/>
    <property type="resolution" value="3.20 A"/>
    <property type="chains" value="A/B/C/D/E/F=21-551"/>
</dbReference>
<dbReference type="PDB" id="3FZ3">
    <property type="method" value="X-ray"/>
    <property type="resolution" value="2.40 A"/>
    <property type="chains" value="A/B/C/D/E/F=21-551"/>
</dbReference>
<dbReference type="PDBsum" id="3EHK"/>
<dbReference type="PDBsum" id="3FZ3"/>
<dbReference type="SMR" id="Q43607"/>
<dbReference type="Allergome" id="1078">
    <property type="allergen name" value="Pru du 6"/>
</dbReference>
<dbReference type="ABCD" id="Q43607">
    <property type="antibodies" value="2 sequenced antibodies"/>
</dbReference>
<dbReference type="EvolutionaryTrace" id="Q43607"/>
<dbReference type="GO" id="GO:0043245">
    <property type="term" value="C:extraorganismal space"/>
    <property type="evidence" value="ECO:0000314"/>
    <property type="project" value="UniProtKB"/>
</dbReference>
<dbReference type="GO" id="GO:0046872">
    <property type="term" value="F:metal ion binding"/>
    <property type="evidence" value="ECO:0007669"/>
    <property type="project" value="UniProtKB-KW"/>
</dbReference>
<dbReference type="GO" id="GO:0045735">
    <property type="term" value="F:nutrient reservoir activity"/>
    <property type="evidence" value="ECO:0000305"/>
    <property type="project" value="UniProtKB"/>
</dbReference>
<dbReference type="GO" id="GO:0048825">
    <property type="term" value="P:cotyledon development"/>
    <property type="evidence" value="ECO:0000270"/>
    <property type="project" value="UniProtKB"/>
</dbReference>
<dbReference type="GO" id="GO:0034214">
    <property type="term" value="P:protein hexamerization"/>
    <property type="evidence" value="ECO:0000314"/>
    <property type="project" value="UniProtKB"/>
</dbReference>
<dbReference type="GO" id="GO:0048316">
    <property type="term" value="P:seed development"/>
    <property type="evidence" value="ECO:0000270"/>
    <property type="project" value="UniProtKB"/>
</dbReference>
<dbReference type="CDD" id="cd02243">
    <property type="entry name" value="cupin_11S_legumin_C"/>
    <property type="match status" value="1"/>
</dbReference>
<dbReference type="CDD" id="cd02242">
    <property type="entry name" value="cupin_11S_legumin_N"/>
    <property type="match status" value="1"/>
</dbReference>
<dbReference type="FunFam" id="2.60.120.10:FF:000073">
    <property type="entry name" value="Glycinin G1"/>
    <property type="match status" value="1"/>
</dbReference>
<dbReference type="Gene3D" id="2.60.120.10">
    <property type="entry name" value="Jelly Rolls"/>
    <property type="match status" value="3"/>
</dbReference>
<dbReference type="InterPro" id="IPR022379">
    <property type="entry name" value="11S_seedstore_CS"/>
</dbReference>
<dbReference type="InterPro" id="IPR006044">
    <property type="entry name" value="11S_seedstore_pln"/>
</dbReference>
<dbReference type="InterPro" id="IPR006045">
    <property type="entry name" value="Cupin_1"/>
</dbReference>
<dbReference type="InterPro" id="IPR014710">
    <property type="entry name" value="RmlC-like_jellyroll"/>
</dbReference>
<dbReference type="InterPro" id="IPR011051">
    <property type="entry name" value="RmlC_Cupin_sf"/>
</dbReference>
<dbReference type="InterPro" id="IPR050253">
    <property type="entry name" value="Seed_Storage-Functional"/>
</dbReference>
<dbReference type="PANTHER" id="PTHR31189:SF35">
    <property type="entry name" value="12S SEED STORAGE PROTEIN CRB"/>
    <property type="match status" value="1"/>
</dbReference>
<dbReference type="PANTHER" id="PTHR31189">
    <property type="entry name" value="OS03G0336100 PROTEIN-RELATED"/>
    <property type="match status" value="1"/>
</dbReference>
<dbReference type="Pfam" id="PF00190">
    <property type="entry name" value="Cupin_1"/>
    <property type="match status" value="2"/>
</dbReference>
<dbReference type="PRINTS" id="PR00439">
    <property type="entry name" value="11SGLOBULIN"/>
</dbReference>
<dbReference type="SMART" id="SM00835">
    <property type="entry name" value="Cupin_1"/>
    <property type="match status" value="2"/>
</dbReference>
<dbReference type="SUPFAM" id="SSF51182">
    <property type="entry name" value="RmlC-like cupins"/>
    <property type="match status" value="1"/>
</dbReference>
<dbReference type="PROSITE" id="PS00305">
    <property type="entry name" value="11S_SEED_STORAGE"/>
    <property type="match status" value="1"/>
</dbReference>
<name>PRU1_PRUDU</name>
<evidence type="ECO:0000255" key="1"/>
<evidence type="ECO:0000255" key="2">
    <source>
        <dbReference type="RuleBase" id="RU003681"/>
    </source>
</evidence>
<evidence type="ECO:0000256" key="3">
    <source>
        <dbReference type="SAM" id="MobiDB-lite"/>
    </source>
</evidence>
<evidence type="ECO:0000269" key="4">
    <source>
    </source>
</evidence>
<evidence type="ECO:0000269" key="5">
    <source>
    </source>
</evidence>
<evidence type="ECO:0000269" key="6">
    <source>
    </source>
</evidence>
<evidence type="ECO:0000269" key="7">
    <source>
    </source>
</evidence>
<evidence type="ECO:0000269" key="8">
    <source>
    </source>
</evidence>
<evidence type="ECO:0000303" key="9">
    <source>
    </source>
</evidence>
<evidence type="ECO:0000303" key="10">
    <source>
    </source>
</evidence>
<evidence type="ECO:0000303" key="11">
    <source>
    </source>
</evidence>
<evidence type="ECO:0000303" key="12">
    <source>
    </source>
</evidence>
<evidence type="ECO:0000305" key="13"/>
<evidence type="ECO:0000305" key="14">
    <source>
    </source>
</evidence>
<evidence type="ECO:0000305" key="15">
    <source>
    </source>
</evidence>
<evidence type="ECO:0000305" key="16">
    <source>
    </source>
</evidence>
<evidence type="ECO:0000305" key="17">
    <source>
    </source>
</evidence>
<evidence type="ECO:0000305" key="18">
    <source>
    </source>
</evidence>
<evidence type="ECO:0000312" key="19">
    <source>
        <dbReference type="EMBL" id="CAA55009.1"/>
    </source>
</evidence>
<evidence type="ECO:0007744" key="20">
    <source>
        <dbReference type="PDB" id="3EHK"/>
    </source>
</evidence>
<evidence type="ECO:0007744" key="21">
    <source>
        <dbReference type="PDB" id="3FZ3"/>
    </source>
</evidence>
<evidence type="ECO:0007829" key="22">
    <source>
        <dbReference type="PDB" id="3EHK"/>
    </source>
</evidence>
<evidence type="ECO:0007829" key="23">
    <source>
        <dbReference type="PDB" id="3FZ3"/>
    </source>
</evidence>
<feature type="signal peptide" evidence="2 15">
    <location>
        <begin position="1"/>
        <end position="20"/>
    </location>
</feature>
<feature type="chain" id="PRO_5007750930" description="Prunin 1 Pru du 6 acidic chain" evidence="2 14 15">
    <location>
        <begin position="21"/>
        <end position="367"/>
    </location>
</feature>
<feature type="chain" id="PRO_0000448060" description="Prunin 1 Pru du 6 basic chain" evidence="14 15">
    <location>
        <begin position="368"/>
        <end position="551"/>
    </location>
</feature>
<feature type="domain" description="Cupin type-1 1" evidence="1">
    <location>
        <begin position="37"/>
        <end position="312"/>
    </location>
</feature>
<feature type="domain" description="Cupin type-1 2" evidence="1">
    <location>
        <begin position="380"/>
        <end position="529"/>
    </location>
</feature>
<feature type="region of interest" description="Disordered" evidence="3">
    <location>
        <begin position="111"/>
        <end position="194"/>
    </location>
</feature>
<feature type="region of interest" description="Disordered" evidence="3">
    <location>
        <begin position="238"/>
        <end position="293"/>
    </location>
</feature>
<feature type="region of interest" description="Disordered" evidence="3">
    <location>
        <begin position="329"/>
        <end position="360"/>
    </location>
</feature>
<feature type="short sequence motif" description="NGXEET; peptidase recognition motif" evidence="15 17">
    <location>
        <begin position="367"/>
        <end position="372"/>
    </location>
</feature>
<feature type="compositionally biased region" description="Low complexity" evidence="3">
    <location>
        <begin position="114"/>
        <end position="124"/>
    </location>
</feature>
<feature type="compositionally biased region" description="Low complexity" evidence="3">
    <location>
        <begin position="132"/>
        <end position="148"/>
    </location>
</feature>
<feature type="compositionally biased region" description="Low complexity" evidence="3">
    <location>
        <begin position="168"/>
        <end position="185"/>
    </location>
</feature>
<feature type="compositionally biased region" description="Low complexity" evidence="3">
    <location>
        <begin position="254"/>
        <end position="275"/>
    </location>
</feature>
<feature type="compositionally biased region" description="Polar residues" evidence="3">
    <location>
        <begin position="282"/>
        <end position="293"/>
    </location>
</feature>
<feature type="compositionally biased region" description="Basic and acidic residues" evidence="3">
    <location>
        <begin position="339"/>
        <end position="350"/>
    </location>
</feature>
<feature type="compositionally biased region" description="Low complexity" evidence="3">
    <location>
        <begin position="351"/>
        <end position="360"/>
    </location>
</feature>
<feature type="binding site" evidence="7 21">
    <location>
        <position position="194"/>
    </location>
    <ligand>
        <name>Ca(2+)</name>
        <dbReference type="ChEBI" id="CHEBI:29108"/>
    </ligand>
</feature>
<feature type="disulfide bond" evidence="7 20 21">
    <location>
        <begin position="32"/>
        <end position="65"/>
    </location>
</feature>
<feature type="disulfide bond" description="Interchain (between acidic and basic chains)" evidence="7 20 21">
    <location>
        <begin position="108"/>
        <end position="374"/>
    </location>
</feature>
<feature type="turn" evidence="23">
    <location>
        <begin position="28"/>
        <end position="32"/>
    </location>
</feature>
<feature type="strand" evidence="23">
    <location>
        <begin position="44"/>
        <end position="48"/>
    </location>
</feature>
<feature type="strand" evidence="23">
    <location>
        <begin position="51"/>
        <end position="55"/>
    </location>
</feature>
<feature type="helix" evidence="23">
    <location>
        <begin position="61"/>
        <end position="66"/>
    </location>
</feature>
<feature type="strand" evidence="23">
    <location>
        <begin position="68"/>
        <end position="75"/>
    </location>
</feature>
<feature type="strand" evidence="23">
    <location>
        <begin position="79"/>
        <end position="88"/>
    </location>
</feature>
<feature type="strand" evidence="23">
    <location>
        <begin position="90"/>
        <end position="96"/>
    </location>
</feature>
<feature type="strand" evidence="23">
    <location>
        <begin position="98"/>
        <end position="103"/>
    </location>
</feature>
<feature type="strand" evidence="23">
    <location>
        <begin position="189"/>
        <end position="191"/>
    </location>
</feature>
<feature type="strand" evidence="23">
    <location>
        <begin position="194"/>
        <end position="197"/>
    </location>
</feature>
<feature type="strand" evidence="23">
    <location>
        <begin position="200"/>
        <end position="204"/>
    </location>
</feature>
<feature type="strand" evidence="23">
    <location>
        <begin position="210"/>
        <end position="213"/>
    </location>
</feature>
<feature type="strand" evidence="23">
    <location>
        <begin position="216"/>
        <end position="218"/>
    </location>
</feature>
<feature type="strand" evidence="23">
    <location>
        <begin position="220"/>
        <end position="227"/>
    </location>
</feature>
<feature type="strand" evidence="23">
    <location>
        <begin position="241"/>
        <end position="246"/>
    </location>
</feature>
<feature type="strand" evidence="22">
    <location>
        <begin position="251"/>
        <end position="253"/>
    </location>
</feature>
<feature type="helix" evidence="23">
    <location>
        <begin position="291"/>
        <end position="294"/>
    </location>
</feature>
<feature type="helix" evidence="23">
    <location>
        <begin position="297"/>
        <end position="304"/>
    </location>
</feature>
<feature type="helix" evidence="23">
    <location>
        <begin position="308"/>
        <end position="315"/>
    </location>
</feature>
<feature type="strand" evidence="23">
    <location>
        <begin position="323"/>
        <end position="326"/>
    </location>
</feature>
<feature type="strand" evidence="23">
    <location>
        <begin position="328"/>
        <end position="330"/>
    </location>
</feature>
<feature type="helix" evidence="23">
    <location>
        <begin position="341"/>
        <end position="356"/>
    </location>
</feature>
<feature type="helix" evidence="23">
    <location>
        <begin position="369"/>
        <end position="371"/>
    </location>
</feature>
<feature type="helix" evidence="23">
    <location>
        <begin position="373"/>
        <end position="375"/>
    </location>
</feature>
<feature type="strand" evidence="23">
    <location>
        <begin position="379"/>
        <end position="381"/>
    </location>
</feature>
<feature type="helix" evidence="23">
    <location>
        <begin position="385"/>
        <end position="387"/>
    </location>
</feature>
<feature type="strand" evidence="23">
    <location>
        <begin position="389"/>
        <end position="392"/>
    </location>
</feature>
<feature type="turn" evidence="23">
    <location>
        <begin position="393"/>
        <end position="395"/>
    </location>
</feature>
<feature type="strand" evidence="23">
    <location>
        <begin position="396"/>
        <end position="402"/>
    </location>
</feature>
<feature type="turn" evidence="23">
    <location>
        <begin position="403"/>
        <end position="405"/>
    </location>
</feature>
<feature type="helix" evidence="23">
    <location>
        <begin position="408"/>
        <end position="412"/>
    </location>
</feature>
<feature type="strand" evidence="23">
    <location>
        <begin position="415"/>
        <end position="421"/>
    </location>
</feature>
<feature type="strand" evidence="23">
    <location>
        <begin position="426"/>
        <end position="434"/>
    </location>
</feature>
<feature type="strand" evidence="23">
    <location>
        <begin position="437"/>
        <end position="451"/>
    </location>
</feature>
<feature type="strand" evidence="23">
    <location>
        <begin position="457"/>
        <end position="464"/>
    </location>
</feature>
<feature type="strand" evidence="23">
    <location>
        <begin position="468"/>
        <end position="471"/>
    </location>
</feature>
<feature type="strand" evidence="23">
    <location>
        <begin position="476"/>
        <end position="494"/>
    </location>
</feature>
<feature type="strand" evidence="23">
    <location>
        <begin position="499"/>
        <end position="504"/>
    </location>
</feature>
<feature type="helix" evidence="23">
    <location>
        <begin position="508"/>
        <end position="511"/>
    </location>
</feature>
<feature type="helix" evidence="23">
    <location>
        <begin position="514"/>
        <end position="521"/>
    </location>
</feature>
<feature type="helix" evidence="23">
    <location>
        <begin position="525"/>
        <end position="533"/>
    </location>
</feature>
<feature type="strand" evidence="23">
    <location>
        <begin position="538"/>
        <end position="541"/>
    </location>
</feature>
<sequence length="551" mass="63017">MAKAFVFSLCLLLVFNGCLAARQSQLSPQNQCQLNQLQAREPDNRIQAEAGQIETWNFNQGDFQCAGVAASRITIQRNGLHLPSYSNAPQLIYIVQGRGVLGAVFSGCPETFEESQQSSQQGRQQEQEQERQQQQQGEQGRQQGQQEQQQERQGRQQGRQQQEEGRQQEQQQGQQGRPQQQQQFRQLDRHQKTRRIREGDVVAIPAGVAYWSYNDGDQELVAVNLFHVSSDHNQLDQNPRKFYLAGNPENEFNQQGQSQPRQQGEQGRPGQHQQPFGRPRQQEQQGNGNNVFSGFNTQLLAQALNVNEETARNLQGQNDNRNQIIQVRGNLDFVQPPRGRQEREHEERQQEQLQQERQQQGEQLMANGLEETFCSLRLKENIGNPERADIFSPRAGRISTLNSHNLPILRFLRLSAERGFFYRNGIYSPHWNVNAHSVVYVIRGNARVQVVNENGDAILDQEVQQGQLFIVPQNHGVIQQAGNQGFEYFAFKTEENAFINTLAGRTSFLRALPDEVLANAYQISREQARQLKYNRQETIALSSSQQRRAVV</sequence>
<protein>
    <recommendedName>
        <fullName evidence="13">Prunin 1 Pru du 6</fullName>
        <shortName evidence="13">Pru 1 Pru du 6</shortName>
    </recommendedName>
    <alternativeName>
        <fullName evidence="11">11S globulin</fullName>
    </alternativeName>
    <alternativeName>
        <fullName evidence="10 11">11S seed storage protein</fullName>
    </alternativeName>
    <alternativeName>
        <fullName evidence="13">Amandin Pru du 6</fullName>
    </alternativeName>
    <alternativeName>
        <fullName evidence="9">Pru du amandin</fullName>
    </alternativeName>
    <allergenName evidence="13">Pru du 6</allergenName>
    <component>
        <recommendedName>
            <fullName evidence="13">Prunin 1 Pru du 6 acidic chain</fullName>
        </recommendedName>
    </component>
    <component>
        <recommendedName>
            <fullName evidence="13">Prunin 1 Pru du 6 basic chain</fullName>
        </recommendedName>
    </component>
</protein>
<organism evidence="19">
    <name type="scientific">Prunus dulcis</name>
    <name type="common">Almond</name>
    <name type="synonym">Amygdalus dulcis</name>
    <dbReference type="NCBI Taxonomy" id="3755"/>
    <lineage>
        <taxon>Eukaryota</taxon>
        <taxon>Viridiplantae</taxon>
        <taxon>Streptophyta</taxon>
        <taxon>Embryophyta</taxon>
        <taxon>Tracheophyta</taxon>
        <taxon>Spermatophyta</taxon>
        <taxon>Magnoliopsida</taxon>
        <taxon>eudicotyledons</taxon>
        <taxon>Gunneridae</taxon>
        <taxon>Pentapetalae</taxon>
        <taxon>rosids</taxon>
        <taxon>fabids</taxon>
        <taxon>Rosales</taxon>
        <taxon>Rosaceae</taxon>
        <taxon>Amygdaloideae</taxon>
        <taxon>Amygdaleae</taxon>
        <taxon>Prunus</taxon>
    </lineage>
</organism>
<comment type="function">
    <text evidence="2 14 15 16 18">Seed storage protein.</text>
</comment>
<comment type="biophysicochemical properties">
    <temperatureDependence>
        <text evidence="6">Thermostable up to 77 degrees Celsius. Complete thermal denaturation at 90 degrees Celsius. Thermal stability decreases in the presence of a reducing agent, dithiothreitol (DTT). The acidic and basic chains have lower thermal stabilities than the native multimeric protein.</text>
    </temperatureDependence>
</comment>
<comment type="subunit">
    <text evidence="5 7">Hexamer of two trimers; each subunit is composed of an acidic and a basic chain derived from a single precursor and linked by a disulfide bond.</text>
</comment>
<comment type="tissue specificity">
    <text evidence="4 5 6 8">Expressed in seed (at protein level) (PubMed:18097098, PubMed:18553996, PubMed:19374443). Expressed in seed (PubMed:7865791).</text>
</comment>
<comment type="developmental stage">
    <text evidence="8">Expressed during seed development. Expressed in cotyledons 110 and 120 days after flowering (DAF). Not expressed in pericarp, root of 30-day germinating plantlet or young leaf.</text>
</comment>
<comment type="PTM">
    <text evidence="14 15 16">Proteolytically processed from a single precursor to produce an acidic and a basic chain that are linked by a disulfide bond.</text>
</comment>
<comment type="allergen">
    <text evidence="13">Causes an allergic reaction in human. Binds to IgE of patients allergic to almonds (Probable).</text>
</comment>
<comment type="similarity">
    <text evidence="2 13">Belongs to the 11S seed storage protein (globulins) family.</text>
</comment>
<accession>Q43607</accession>
<reference evidence="19" key="1">
    <citation type="journal article" date="1995" name="Plant Mol. Biol.">
        <title>Molecular characterization of cDNAs corresponding to genes expressed during almond (Prunus amygdalus Batsch) seed development.</title>
        <authorList>
            <person name="Garcia-Mas J."/>
            <person name="Messeguer R."/>
            <person name="Arus P."/>
            <person name="Puigdomenech P."/>
        </authorList>
    </citation>
    <scope>NUCLEOTIDE SEQUENCE [MRNA]</scope>
    <scope>TISSUE SPECIFICITY</scope>
    <scope>DEVELOPMENTAL STAGE</scope>
    <source>
        <tissue evidence="12 19">Immature seed</tissue>
    </source>
</reference>
<reference key="2">
    <citation type="journal article" date="2008" name="J. Agric. Food Chem.">
        <title>Purification, crystallization and preliminary X-ray characterization of prunin-1, a major component of the almond (Prunus dulcis) allergen amandin.</title>
        <authorList>
            <person name="Albillos S.M."/>
            <person name="Jin T."/>
            <person name="Howard A."/>
            <person name="Zhang Y."/>
            <person name="Kothary M.H."/>
            <person name="Fu T.J."/>
        </authorList>
    </citation>
    <scope>PROTEIN SEQUENCE OF 21-50 AND 368-393</scope>
    <scope>CRYSTALLIZATION</scope>
    <scope>SUBUNIT</scope>
    <scope>TISSUE SPECIFICITY</scope>
</reference>
<reference key="3">
    <citation type="journal article" date="2008" name="Acta Crystallogr. F">
        <title>Purification, identification and preliminary crystallographic studies of Pru du amandin, an allergenic protein from Prunus dulcis.</title>
        <authorList>
            <person name="Gaur V."/>
            <person name="Sethi D.K."/>
            <person name="Salunke D.M."/>
        </authorList>
    </citation>
    <scope>PROTEIN SEQUENCE OF 21-35 AND 368-387</scope>
    <scope>CRYSTALLIZATION</scope>
    <scope>TISSUE SPECIFICITY</scope>
    <scope>CIRCULAR DICHROISM ANALYSIS</scope>
</reference>
<reference key="4">
    <citation type="journal article" date="2009" name="J. Agric. Food Chem.">
        <title>Structural stability of Amandin, a major allergen from almond (Prunus dulcis), and its acidic and basic polypeptides.</title>
        <authorList>
            <person name="Albillos S.M."/>
            <person name="Menhart N."/>
            <person name="Fu T.J."/>
        </authorList>
    </citation>
    <scope>BIOPHYSICOCHEMICAL PROPERTIES</scope>
    <scope>TISSUE SPECIFICITY</scope>
    <scope>CIRCULAR DICHROISM ANALYSIS</scope>
</reference>
<reference evidence="20" key="5">
    <citation type="submission" date="2008-09" db="PDB data bank">
        <title>Crystal structure of Pru du amandin, an allergenic protein from prunus dulcis.</title>
        <authorList>
            <person name="Gaur V."/>
            <person name="Salunke D.M."/>
        </authorList>
    </citation>
    <scope>X-RAY CRYSTALLOGRAPHY (3.20 ANGSTROMS) OF 21-551</scope>
    <scope>DISULFIDE BONDS</scope>
</reference>
<reference evidence="21" key="6">
    <citation type="journal article" date="2009" name="J. Agric. Food Chem.">
        <title>Crystal structure of prunin-1, a major component of the almond (Prunus dulcis) allergen amandin.</title>
        <authorList>
            <person name="Jin T."/>
            <person name="Albillos S.M."/>
            <person name="Guo F."/>
            <person name="Howard A."/>
            <person name="Fu T.J."/>
            <person name="Kothary M.H."/>
            <person name="Zhang Y.Z."/>
        </authorList>
    </citation>
    <scope>X-RAY CRYSTALLOGRAPHY (2.40 ANGSTROMS) OF 21-551</scope>
    <scope>SUBUNIT</scope>
    <scope>DISULFIDE BONDS</scope>
</reference>
<proteinExistence type="evidence at protein level"/>
<keyword id="KW-0002">3D-structure</keyword>
<keyword id="KW-0020">Allergen</keyword>
<keyword id="KW-0903">Direct protein sequencing</keyword>
<keyword id="KW-1015">Disulfide bond</keyword>
<keyword id="KW-0479">Metal-binding</keyword>
<keyword id="KW-0708">Seed storage protein</keyword>
<keyword id="KW-0732">Signal</keyword>
<keyword id="KW-0758">Storage protein</keyword>